<protein>
    <recommendedName>
        <fullName evidence="1">ADP-L-glycero-D-manno-heptose-6-epimerase</fullName>
        <ecNumber evidence="1">5.1.3.20</ecNumber>
    </recommendedName>
    <alternativeName>
        <fullName evidence="1">ADP-L-glycero-beta-D-manno-heptose-6-epimerase</fullName>
        <shortName evidence="1">ADP-glyceromanno-heptose 6-epimerase</shortName>
        <shortName evidence="1">ADP-hep 6-epimerase</shortName>
        <shortName evidence="1">AGME</shortName>
    </alternativeName>
</protein>
<dbReference type="EC" id="5.1.3.20" evidence="1"/>
<dbReference type="EMBL" id="CP000946">
    <property type="protein sequence ID" value="ACA75776.1"/>
    <property type="molecule type" value="Genomic_DNA"/>
</dbReference>
<dbReference type="SMR" id="B1IZH2"/>
<dbReference type="KEGG" id="ecl:EcolC_0090"/>
<dbReference type="HOGENOM" id="CLU_007383_1_3_6"/>
<dbReference type="UniPathway" id="UPA00356">
    <property type="reaction ID" value="UER00440"/>
</dbReference>
<dbReference type="GO" id="GO:0008712">
    <property type="term" value="F:ADP-glyceromanno-heptose 6-epimerase activity"/>
    <property type="evidence" value="ECO:0007669"/>
    <property type="project" value="UniProtKB-UniRule"/>
</dbReference>
<dbReference type="GO" id="GO:0050661">
    <property type="term" value="F:NADP binding"/>
    <property type="evidence" value="ECO:0007669"/>
    <property type="project" value="InterPro"/>
</dbReference>
<dbReference type="GO" id="GO:0097171">
    <property type="term" value="P:ADP-L-glycero-beta-D-manno-heptose biosynthetic process"/>
    <property type="evidence" value="ECO:0007669"/>
    <property type="project" value="UniProtKB-UniPathway"/>
</dbReference>
<dbReference type="GO" id="GO:0005975">
    <property type="term" value="P:carbohydrate metabolic process"/>
    <property type="evidence" value="ECO:0007669"/>
    <property type="project" value="UniProtKB-UniRule"/>
</dbReference>
<dbReference type="CDD" id="cd05248">
    <property type="entry name" value="ADP_GME_SDR_e"/>
    <property type="match status" value="1"/>
</dbReference>
<dbReference type="Gene3D" id="3.40.50.720">
    <property type="entry name" value="NAD(P)-binding Rossmann-like Domain"/>
    <property type="match status" value="1"/>
</dbReference>
<dbReference type="Gene3D" id="3.90.25.10">
    <property type="entry name" value="UDP-galactose 4-epimerase, domain 1"/>
    <property type="match status" value="1"/>
</dbReference>
<dbReference type="HAMAP" id="MF_01601">
    <property type="entry name" value="Heptose_epimerase"/>
    <property type="match status" value="1"/>
</dbReference>
<dbReference type="InterPro" id="IPR001509">
    <property type="entry name" value="Epimerase_deHydtase"/>
</dbReference>
<dbReference type="InterPro" id="IPR011912">
    <property type="entry name" value="Heptose_epim"/>
</dbReference>
<dbReference type="InterPro" id="IPR036291">
    <property type="entry name" value="NAD(P)-bd_dom_sf"/>
</dbReference>
<dbReference type="NCBIfam" id="TIGR02197">
    <property type="entry name" value="heptose_epim"/>
    <property type="match status" value="1"/>
</dbReference>
<dbReference type="NCBIfam" id="NF008360">
    <property type="entry name" value="PRK11150.1"/>
    <property type="match status" value="1"/>
</dbReference>
<dbReference type="PANTHER" id="PTHR43103:SF3">
    <property type="entry name" value="ADP-L-GLYCERO-D-MANNO-HEPTOSE-6-EPIMERASE"/>
    <property type="match status" value="1"/>
</dbReference>
<dbReference type="PANTHER" id="PTHR43103">
    <property type="entry name" value="NUCLEOSIDE-DIPHOSPHATE-SUGAR EPIMERASE"/>
    <property type="match status" value="1"/>
</dbReference>
<dbReference type="Pfam" id="PF01370">
    <property type="entry name" value="Epimerase"/>
    <property type="match status" value="1"/>
</dbReference>
<dbReference type="SUPFAM" id="SSF51735">
    <property type="entry name" value="NAD(P)-binding Rossmann-fold domains"/>
    <property type="match status" value="1"/>
</dbReference>
<keyword id="KW-0007">Acetylation</keyword>
<keyword id="KW-0119">Carbohydrate metabolism</keyword>
<keyword id="KW-0413">Isomerase</keyword>
<keyword id="KW-0521">NADP</keyword>
<comment type="function">
    <text evidence="1">Catalyzes the interconversion between ADP-D-glycero-beta-D-manno-heptose and ADP-L-glycero-beta-D-manno-heptose via an epimerization at carbon 6 of the heptose.</text>
</comment>
<comment type="catalytic activity">
    <reaction evidence="1">
        <text>ADP-D-glycero-beta-D-manno-heptose = ADP-L-glycero-beta-D-manno-heptose</text>
        <dbReference type="Rhea" id="RHEA:17577"/>
        <dbReference type="ChEBI" id="CHEBI:59967"/>
        <dbReference type="ChEBI" id="CHEBI:61506"/>
        <dbReference type="EC" id="5.1.3.20"/>
    </reaction>
</comment>
<comment type="cofactor">
    <cofactor evidence="1">
        <name>NADP(+)</name>
        <dbReference type="ChEBI" id="CHEBI:58349"/>
    </cofactor>
    <text evidence="1">Binds 1 NADP(+) per subunit.</text>
</comment>
<comment type="pathway">
    <text evidence="1">Nucleotide-sugar biosynthesis; ADP-L-glycero-beta-D-manno-heptose biosynthesis; ADP-L-glycero-beta-D-manno-heptose from D-glycero-beta-D-manno-heptose 7-phosphate: step 4/4.</text>
</comment>
<comment type="subunit">
    <text evidence="1">Homopentamer.</text>
</comment>
<comment type="domain">
    <text evidence="1">Contains a large N-terminal NADP-binding domain, and a smaller C-terminal substrate-binding domain.</text>
</comment>
<comment type="similarity">
    <text evidence="1">Belongs to the NAD(P)-dependent epimerase/dehydratase family. HldD subfamily.</text>
</comment>
<reference key="1">
    <citation type="submission" date="2008-02" db="EMBL/GenBank/DDBJ databases">
        <title>Complete sequence of Escherichia coli C str. ATCC 8739.</title>
        <authorList>
            <person name="Copeland A."/>
            <person name="Lucas S."/>
            <person name="Lapidus A."/>
            <person name="Glavina del Rio T."/>
            <person name="Dalin E."/>
            <person name="Tice H."/>
            <person name="Bruce D."/>
            <person name="Goodwin L."/>
            <person name="Pitluck S."/>
            <person name="Kiss H."/>
            <person name="Brettin T."/>
            <person name="Detter J.C."/>
            <person name="Han C."/>
            <person name="Kuske C.R."/>
            <person name="Schmutz J."/>
            <person name="Larimer F."/>
            <person name="Land M."/>
            <person name="Hauser L."/>
            <person name="Kyrpides N."/>
            <person name="Mikhailova N."/>
            <person name="Ingram L."/>
            <person name="Richardson P."/>
        </authorList>
    </citation>
    <scope>NUCLEOTIDE SEQUENCE [LARGE SCALE GENOMIC DNA]</scope>
    <source>
        <strain>ATCC 8739 / DSM 1576 / NBRC 3972 / NCIMB 8545 / WDCM 00012 / Crooks</strain>
    </source>
</reference>
<sequence length="310" mass="34938">MIIVTGGAGFIGSNIVKALNDKGITDILVVDNLKDGTKFVNLVDLDIADYMDKEDFLIQIMAGEEFGDVEAIFHEGACSSTTEWDGKYMMDNNYQYSKELLHYCLEREIPFLYASSAATYGGRTSDFIESREYEKPLNVYGYSKFLFDEYVRQILPEANSQIVGFRYFNVYGPREGHKGSMASVAFHLNTQLNKGESPKLFEGSENFKRDFVYVGDVADVNLWFLENGVSGIFNLGTGRAESFQAVADATLAYHKKGQIEYIPFPDKLKGRYQAFTQADLTNLRAAGYDKPFKTVAEGVMEYMAWLNRDA</sequence>
<proteinExistence type="inferred from homology"/>
<name>HLDD_ECOLC</name>
<feature type="chain" id="PRO_1000088010" description="ADP-L-glycero-D-manno-heptose-6-epimerase">
    <location>
        <begin position="1"/>
        <end position="310"/>
    </location>
</feature>
<feature type="active site" description="Proton acceptor" evidence="1">
    <location>
        <position position="140"/>
    </location>
</feature>
<feature type="active site" description="Proton acceptor" evidence="1">
    <location>
        <position position="178"/>
    </location>
</feature>
<feature type="binding site" evidence="1">
    <location>
        <begin position="10"/>
        <end position="11"/>
    </location>
    <ligand>
        <name>NADP(+)</name>
        <dbReference type="ChEBI" id="CHEBI:58349"/>
    </ligand>
</feature>
<feature type="binding site" evidence="1">
    <location>
        <begin position="31"/>
        <end position="32"/>
    </location>
    <ligand>
        <name>NADP(+)</name>
        <dbReference type="ChEBI" id="CHEBI:58349"/>
    </ligand>
</feature>
<feature type="binding site" evidence="1">
    <location>
        <position position="38"/>
    </location>
    <ligand>
        <name>NADP(+)</name>
        <dbReference type="ChEBI" id="CHEBI:58349"/>
    </ligand>
</feature>
<feature type="binding site" evidence="1">
    <location>
        <position position="53"/>
    </location>
    <ligand>
        <name>NADP(+)</name>
        <dbReference type="ChEBI" id="CHEBI:58349"/>
    </ligand>
</feature>
<feature type="binding site" evidence="1">
    <location>
        <begin position="75"/>
        <end position="79"/>
    </location>
    <ligand>
        <name>NADP(+)</name>
        <dbReference type="ChEBI" id="CHEBI:58349"/>
    </ligand>
</feature>
<feature type="binding site" evidence="1">
    <location>
        <position position="92"/>
    </location>
    <ligand>
        <name>NADP(+)</name>
        <dbReference type="ChEBI" id="CHEBI:58349"/>
    </ligand>
</feature>
<feature type="binding site" evidence="1">
    <location>
        <position position="144"/>
    </location>
    <ligand>
        <name>NADP(+)</name>
        <dbReference type="ChEBI" id="CHEBI:58349"/>
    </ligand>
</feature>
<feature type="binding site" evidence="1">
    <location>
        <position position="169"/>
    </location>
    <ligand>
        <name>substrate</name>
    </ligand>
</feature>
<feature type="binding site" evidence="1">
    <location>
        <position position="170"/>
    </location>
    <ligand>
        <name>NADP(+)</name>
        <dbReference type="ChEBI" id="CHEBI:58349"/>
    </ligand>
</feature>
<feature type="binding site" evidence="1">
    <location>
        <position position="178"/>
    </location>
    <ligand>
        <name>NADP(+)</name>
        <dbReference type="ChEBI" id="CHEBI:58349"/>
    </ligand>
</feature>
<feature type="binding site" evidence="1">
    <location>
        <position position="180"/>
    </location>
    <ligand>
        <name>substrate</name>
    </ligand>
</feature>
<feature type="binding site" evidence="1">
    <location>
        <position position="187"/>
    </location>
    <ligand>
        <name>substrate</name>
    </ligand>
</feature>
<feature type="binding site" evidence="1">
    <location>
        <begin position="201"/>
        <end position="204"/>
    </location>
    <ligand>
        <name>substrate</name>
    </ligand>
</feature>
<feature type="binding site" evidence="1">
    <location>
        <position position="209"/>
    </location>
    <ligand>
        <name>substrate</name>
    </ligand>
</feature>
<feature type="binding site" evidence="1">
    <location>
        <position position="272"/>
    </location>
    <ligand>
        <name>substrate</name>
    </ligand>
</feature>
<feature type="modified residue" description="N6-acetyllysine" evidence="1">
    <location>
        <position position="267"/>
    </location>
</feature>
<organism>
    <name type="scientific">Escherichia coli (strain ATCC 8739 / DSM 1576 / NBRC 3972 / NCIMB 8545 / WDCM 00012 / Crooks)</name>
    <dbReference type="NCBI Taxonomy" id="481805"/>
    <lineage>
        <taxon>Bacteria</taxon>
        <taxon>Pseudomonadati</taxon>
        <taxon>Pseudomonadota</taxon>
        <taxon>Gammaproteobacteria</taxon>
        <taxon>Enterobacterales</taxon>
        <taxon>Enterobacteriaceae</taxon>
        <taxon>Escherichia</taxon>
    </lineage>
</organism>
<gene>
    <name evidence="1" type="primary">hldD</name>
    <name type="ordered locus">EcolC_0090</name>
</gene>
<evidence type="ECO:0000255" key="1">
    <source>
        <dbReference type="HAMAP-Rule" id="MF_01601"/>
    </source>
</evidence>
<accession>B1IZH2</accession>